<name>TRI11_BOVIN</name>
<comment type="function">
    <text evidence="1 2">E3 ubiquitin-protein ligase that promotes the degradation of insoluble ubiquitinated proteins, including insoluble PAX6, poly-Gln repeat expanded HTT and poly-Ala repeat expanded ARX. Mediates PAX6 ubiquitination leading to proteasomal degradation, thereby modulating cortical neurogenesis. May also inhibit PAX6 transcriptional activity, possibly in part by preventing the binding of PAX6 to its consensus sequences. May contribute to the regulation of the intracellular level of HN (humanin) or HN-containing proteins through the proteasomal degradation pathway (By similarity). Mediates MED15 ubiquitination leading to proteasomal degradation. May contribute to the innate restriction of retroviruses. Upon overexpression, reduces HIV-1 and murine leukemia virus infectivity, by suppressing viral gene expression. Antiviral activity depends on a functional E3 ubiquitin-protein ligase domain. May regulate TRIM5 turnover via the proteasome pathway, thus counteracting the TRIM5-mediated cross-species restriction of retroviral infection at early stages of the retroviral life cycle. Acts as an inhibitor of the AIM2 inflammasome by promoting autophagy-dependent degradation of AIM2. Mechanistically, undergoes autoubiquitination upon DNA stimulation, promoting interaction with AIM2 and SQSTM1/p62, leading to AIM2 recruitment to autophagosomes (By similarity).</text>
</comment>
<comment type="catalytic activity">
    <reaction evidence="1">
        <text>S-ubiquitinyl-[E2 ubiquitin-conjugating enzyme]-L-cysteine + [acceptor protein]-L-lysine = [E2 ubiquitin-conjugating enzyme]-L-cysteine + N(6)-ubiquitinyl-[acceptor protein]-L-lysine.</text>
        <dbReference type="EC" id="2.3.2.27"/>
    </reaction>
</comment>
<comment type="pathway">
    <text evidence="1">Protein modification; protein ubiquitination.</text>
</comment>
<comment type="subunit">
    <text evidence="1 2">Binds cytoplasmic tail of integrin alpha-1 (By similarity). Interacts with the HN peptide. Interacts with PHOX2B (By similarity). Interacts (when autoubiquitinated) with SQSTM1/p62; promoting AIM2 recruitment to autophagosomes. Interacts with AIM2; promoting its autophagy-dependent degradation (By similarity).</text>
</comment>
<comment type="subcellular location">
    <subcellularLocation>
        <location evidence="1">Cytoplasm</location>
    </subcellularLocation>
    <subcellularLocation>
        <location evidence="1">Nucleus</location>
    </subcellularLocation>
</comment>
<comment type="domain">
    <text evidence="2">The coiled-coil domain and the B30.2 domain are both necessary for interaction with HN and PAX6. They are also involved in MED15-binding.</text>
</comment>
<comment type="domain">
    <text evidence="2">The B30.2 domain may be involved cellular protein quality control by promoting the degradation of insoluble ubiquitinated proteins.</text>
</comment>
<comment type="PTM">
    <text evidence="1">Autoubiquitinated upon DNA stimulation; autoubiquitination promotes interaction with SQSTM1/p62 and recruitment of AIM2 to autophagosomes.</text>
</comment>
<comment type="similarity">
    <text evidence="7">Belongs to the TRIM/RBCC family.</text>
</comment>
<reference key="1">
    <citation type="submission" date="2006-10" db="EMBL/GenBank/DDBJ databases">
        <authorList>
            <consortium name="NIH - Mammalian Gene Collection (MGC) project"/>
        </authorList>
    </citation>
    <scope>NUCLEOTIDE SEQUENCE [LARGE SCALE MRNA]</scope>
    <source>
        <strain>Hereford</strain>
        <tissue>Fetal medulla</tissue>
    </source>
</reference>
<accession>A0JN74</accession>
<protein>
    <recommendedName>
        <fullName>E3 ubiquitin-protein ligase TRIM11</fullName>
        <ecNumber evidence="2">2.3.2.27</ecNumber>
    </recommendedName>
    <alternativeName>
        <fullName>Tripartite motif-containing protein 11</fullName>
    </alternativeName>
</protein>
<sequence>MAAPDLSTNLQEEATCAICLDYFTDPVMTDCGHNFCRECIRRCWGQPEGPYACPECRELFPQRNLRPNRPLAKMAEMARRLHPPSPVPQGVCAAHREPLAAFCGDELRLLCAACERSGEHWAHRVRPLQDAAEDLKSKLEKSLEHLRKQMEDALLFQAQAEETCSLWQKMVETQRQNVLTEFERLRRLLVEEEQLLLQRLEEEELEVLPPLRESAARLGQQSAQLAELITELEGRCQLPALGLLQDIRDTLRRVQDVKLQPPEVVPMEMRTVCRVPGLVEALRRFRGDMTLDPDTANPELVLSEDRRSVRRGDLRQALPDSPERFDPGPCVLGREPLTSGRHYWEVEVGERASWALGVCRENANRKEKGELFAGNGFWILVFLGSYYNSSERAFAPLRDPPRRVGIFLDYEAGHLSFYSANDGSLLYTFPETPFSGTLRALFSPLSSSPTPMTICRLKGGPGDGLAPQ</sequence>
<gene>
    <name type="primary">TRIM11</name>
</gene>
<evidence type="ECO:0000250" key="1">
    <source>
        <dbReference type="UniProtKB" id="Q96F44"/>
    </source>
</evidence>
<evidence type="ECO:0000250" key="2">
    <source>
        <dbReference type="UniProtKB" id="Q99PQ2"/>
    </source>
</evidence>
<evidence type="ECO:0000255" key="3"/>
<evidence type="ECO:0000255" key="4">
    <source>
        <dbReference type="PROSITE-ProRule" id="PRU00024"/>
    </source>
</evidence>
<evidence type="ECO:0000255" key="5">
    <source>
        <dbReference type="PROSITE-ProRule" id="PRU00175"/>
    </source>
</evidence>
<evidence type="ECO:0000255" key="6">
    <source>
        <dbReference type="PROSITE-ProRule" id="PRU00548"/>
    </source>
</evidence>
<evidence type="ECO:0000305" key="7"/>
<organism>
    <name type="scientific">Bos taurus</name>
    <name type="common">Bovine</name>
    <dbReference type="NCBI Taxonomy" id="9913"/>
    <lineage>
        <taxon>Eukaryota</taxon>
        <taxon>Metazoa</taxon>
        <taxon>Chordata</taxon>
        <taxon>Craniata</taxon>
        <taxon>Vertebrata</taxon>
        <taxon>Euteleostomi</taxon>
        <taxon>Mammalia</taxon>
        <taxon>Eutheria</taxon>
        <taxon>Laurasiatheria</taxon>
        <taxon>Artiodactyla</taxon>
        <taxon>Ruminantia</taxon>
        <taxon>Pecora</taxon>
        <taxon>Bovidae</taxon>
        <taxon>Bovinae</taxon>
        <taxon>Bos</taxon>
    </lineage>
</organism>
<feature type="chain" id="PRO_0000396934" description="E3 ubiquitin-protein ligase TRIM11">
    <location>
        <begin position="1"/>
        <end position="468"/>
    </location>
</feature>
<feature type="domain" description="B30.2/SPRY" evidence="6">
    <location>
        <begin position="268"/>
        <end position="461"/>
    </location>
</feature>
<feature type="zinc finger region" description="RING-type" evidence="5">
    <location>
        <begin position="16"/>
        <end position="57"/>
    </location>
</feature>
<feature type="zinc finger region" description="B box-type" evidence="4">
    <location>
        <begin position="87"/>
        <end position="128"/>
    </location>
</feature>
<feature type="coiled-coil region" evidence="3">
    <location>
        <begin position="128"/>
        <end position="233"/>
    </location>
</feature>
<feature type="binding site" evidence="4">
    <location>
        <position position="92"/>
    </location>
    <ligand>
        <name>Zn(2+)</name>
        <dbReference type="ChEBI" id="CHEBI:29105"/>
    </ligand>
</feature>
<feature type="binding site" evidence="4">
    <location>
        <position position="95"/>
    </location>
    <ligand>
        <name>Zn(2+)</name>
        <dbReference type="ChEBI" id="CHEBI:29105"/>
    </ligand>
</feature>
<feature type="binding site" evidence="4">
    <location>
        <position position="114"/>
    </location>
    <ligand>
        <name>Zn(2+)</name>
        <dbReference type="ChEBI" id="CHEBI:29105"/>
    </ligand>
</feature>
<feature type="binding site" evidence="4">
    <location>
        <position position="120"/>
    </location>
    <ligand>
        <name>Zn(2+)</name>
        <dbReference type="ChEBI" id="CHEBI:29105"/>
    </ligand>
</feature>
<feature type="modified residue" description="Phosphoserine" evidence="1">
    <location>
        <position position="85"/>
    </location>
</feature>
<feature type="cross-link" description="Glycyl lysine isopeptide (Lys-Gly) (interchain with G-Cter in ubiquitin)" evidence="1">
    <location>
        <position position="458"/>
    </location>
</feature>
<keyword id="KW-0051">Antiviral defense</keyword>
<keyword id="KW-0175">Coiled coil</keyword>
<keyword id="KW-0963">Cytoplasm</keyword>
<keyword id="KW-1017">Isopeptide bond</keyword>
<keyword id="KW-0479">Metal-binding</keyword>
<keyword id="KW-0539">Nucleus</keyword>
<keyword id="KW-0597">Phosphoprotein</keyword>
<keyword id="KW-1185">Reference proteome</keyword>
<keyword id="KW-0808">Transferase</keyword>
<keyword id="KW-0832">Ubl conjugation</keyword>
<keyword id="KW-0833">Ubl conjugation pathway</keyword>
<keyword id="KW-0862">Zinc</keyword>
<keyword id="KW-0863">Zinc-finger</keyword>
<dbReference type="EC" id="2.3.2.27" evidence="2"/>
<dbReference type="EMBL" id="BC126548">
    <property type="protein sequence ID" value="AAI26549.1"/>
    <property type="molecule type" value="mRNA"/>
</dbReference>
<dbReference type="RefSeq" id="NP_001071388.1">
    <property type="nucleotide sequence ID" value="NM_001077920.2"/>
</dbReference>
<dbReference type="SMR" id="A0JN74"/>
<dbReference type="FunCoup" id="A0JN74">
    <property type="interactions" value="1802"/>
</dbReference>
<dbReference type="STRING" id="9913.ENSBTAP00000024852"/>
<dbReference type="PaxDb" id="9913-ENSBTAP00000024852"/>
<dbReference type="GeneID" id="514580"/>
<dbReference type="KEGG" id="bta:514580"/>
<dbReference type="CTD" id="81559"/>
<dbReference type="eggNOG" id="KOG2177">
    <property type="taxonomic scope" value="Eukaryota"/>
</dbReference>
<dbReference type="HOGENOM" id="CLU_013137_0_3_1"/>
<dbReference type="InParanoid" id="A0JN74"/>
<dbReference type="OrthoDB" id="128536at2759"/>
<dbReference type="TreeFam" id="TF338674"/>
<dbReference type="UniPathway" id="UPA00143"/>
<dbReference type="Proteomes" id="UP000009136">
    <property type="component" value="Unplaced"/>
</dbReference>
<dbReference type="GO" id="GO:0005737">
    <property type="term" value="C:cytoplasm"/>
    <property type="evidence" value="ECO:0000318"/>
    <property type="project" value="GO_Central"/>
</dbReference>
<dbReference type="GO" id="GO:0005829">
    <property type="term" value="C:cytosol"/>
    <property type="evidence" value="ECO:0000318"/>
    <property type="project" value="GO_Central"/>
</dbReference>
<dbReference type="GO" id="GO:0005634">
    <property type="term" value="C:nucleus"/>
    <property type="evidence" value="ECO:0007669"/>
    <property type="project" value="UniProtKB-SubCell"/>
</dbReference>
<dbReference type="GO" id="GO:0030674">
    <property type="term" value="F:protein-macromolecule adaptor activity"/>
    <property type="evidence" value="ECO:0000250"/>
    <property type="project" value="UniProtKB"/>
</dbReference>
<dbReference type="GO" id="GO:0061630">
    <property type="term" value="F:ubiquitin protein ligase activity"/>
    <property type="evidence" value="ECO:0000318"/>
    <property type="project" value="GO_Central"/>
</dbReference>
<dbReference type="GO" id="GO:0004842">
    <property type="term" value="F:ubiquitin-protein transferase activity"/>
    <property type="evidence" value="ECO:0000250"/>
    <property type="project" value="UniProtKB"/>
</dbReference>
<dbReference type="GO" id="GO:0008270">
    <property type="term" value="F:zinc ion binding"/>
    <property type="evidence" value="ECO:0007669"/>
    <property type="project" value="UniProtKB-KW"/>
</dbReference>
<dbReference type="GO" id="GO:0046597">
    <property type="term" value="P:host-mediated suppression of symbiont invasion"/>
    <property type="evidence" value="ECO:0000318"/>
    <property type="project" value="GO_Central"/>
</dbReference>
<dbReference type="GO" id="GO:0045087">
    <property type="term" value="P:innate immune response"/>
    <property type="evidence" value="ECO:0000318"/>
    <property type="project" value="GO_Central"/>
</dbReference>
<dbReference type="GO" id="GO:0140972">
    <property type="term" value="P:negative regulation of AIM2 inflammasome complex assembly"/>
    <property type="evidence" value="ECO:0000250"/>
    <property type="project" value="UniProtKB"/>
</dbReference>
<dbReference type="GO" id="GO:0032897">
    <property type="term" value="P:negative regulation of viral transcription"/>
    <property type="evidence" value="ECO:0000318"/>
    <property type="project" value="GO_Central"/>
</dbReference>
<dbReference type="GO" id="GO:0016567">
    <property type="term" value="P:protein ubiquitination"/>
    <property type="evidence" value="ECO:0000250"/>
    <property type="project" value="UniProtKB"/>
</dbReference>
<dbReference type="GO" id="GO:0010468">
    <property type="term" value="P:regulation of gene expression"/>
    <property type="evidence" value="ECO:0000318"/>
    <property type="project" value="GO_Central"/>
</dbReference>
<dbReference type="GO" id="GO:0044790">
    <property type="term" value="P:suppression of viral release by host"/>
    <property type="evidence" value="ECO:0000318"/>
    <property type="project" value="GO_Central"/>
</dbReference>
<dbReference type="CDD" id="cd16594">
    <property type="entry name" value="RING-HC_TRIM7-like_C-IV"/>
    <property type="match status" value="1"/>
</dbReference>
<dbReference type="CDD" id="cd15811">
    <property type="entry name" value="SPRY_PRY_TRIM11"/>
    <property type="match status" value="1"/>
</dbReference>
<dbReference type="FunFam" id="2.60.120.920:FF:000004">
    <property type="entry name" value="Butyrophilin subfamily 1 member A1"/>
    <property type="match status" value="1"/>
</dbReference>
<dbReference type="FunFam" id="3.30.160.60:FF:001359">
    <property type="entry name" value="E3 ubiquitin-protein ligase TRIM11"/>
    <property type="match status" value="1"/>
</dbReference>
<dbReference type="FunFam" id="3.30.40.10:FF:000232">
    <property type="entry name" value="E3 ubiquitin-protein ligase TRIM11"/>
    <property type="match status" value="1"/>
</dbReference>
<dbReference type="Gene3D" id="2.60.120.920">
    <property type="match status" value="1"/>
</dbReference>
<dbReference type="Gene3D" id="3.30.160.60">
    <property type="entry name" value="Classic Zinc Finger"/>
    <property type="match status" value="1"/>
</dbReference>
<dbReference type="Gene3D" id="3.30.40.10">
    <property type="entry name" value="Zinc/RING finger domain, C3HC4 (zinc finger)"/>
    <property type="match status" value="1"/>
</dbReference>
<dbReference type="InterPro" id="IPR001870">
    <property type="entry name" value="B30.2/SPRY"/>
</dbReference>
<dbReference type="InterPro" id="IPR043136">
    <property type="entry name" value="B30.2/SPRY_sf"/>
</dbReference>
<dbReference type="InterPro" id="IPR003879">
    <property type="entry name" value="Butyrophylin_SPRY"/>
</dbReference>
<dbReference type="InterPro" id="IPR013320">
    <property type="entry name" value="ConA-like_dom_sf"/>
</dbReference>
<dbReference type="InterPro" id="IPR006574">
    <property type="entry name" value="PRY"/>
</dbReference>
<dbReference type="InterPro" id="IPR003877">
    <property type="entry name" value="SPRY_dom"/>
</dbReference>
<dbReference type="InterPro" id="IPR050143">
    <property type="entry name" value="TRIM/RBCC"/>
</dbReference>
<dbReference type="InterPro" id="IPR000315">
    <property type="entry name" value="Znf_B-box"/>
</dbReference>
<dbReference type="InterPro" id="IPR001841">
    <property type="entry name" value="Znf_RING"/>
</dbReference>
<dbReference type="InterPro" id="IPR013083">
    <property type="entry name" value="Znf_RING/FYVE/PHD"/>
</dbReference>
<dbReference type="InterPro" id="IPR017907">
    <property type="entry name" value="Znf_RING_CS"/>
</dbReference>
<dbReference type="PANTHER" id="PTHR24103">
    <property type="entry name" value="E3 UBIQUITIN-PROTEIN LIGASE TRIM"/>
    <property type="match status" value="1"/>
</dbReference>
<dbReference type="Pfam" id="PF13765">
    <property type="entry name" value="PRY"/>
    <property type="match status" value="1"/>
</dbReference>
<dbReference type="Pfam" id="PF00622">
    <property type="entry name" value="SPRY"/>
    <property type="match status" value="1"/>
</dbReference>
<dbReference type="Pfam" id="PF00643">
    <property type="entry name" value="zf-B_box"/>
    <property type="match status" value="1"/>
</dbReference>
<dbReference type="Pfam" id="PF15227">
    <property type="entry name" value="zf-C3HC4_4"/>
    <property type="match status" value="1"/>
</dbReference>
<dbReference type="PRINTS" id="PR01407">
    <property type="entry name" value="BUTYPHLNCDUF"/>
</dbReference>
<dbReference type="SMART" id="SM00336">
    <property type="entry name" value="BBOX"/>
    <property type="match status" value="1"/>
</dbReference>
<dbReference type="SMART" id="SM00589">
    <property type="entry name" value="PRY"/>
    <property type="match status" value="1"/>
</dbReference>
<dbReference type="SMART" id="SM00184">
    <property type="entry name" value="RING"/>
    <property type="match status" value="1"/>
</dbReference>
<dbReference type="SMART" id="SM00449">
    <property type="entry name" value="SPRY"/>
    <property type="match status" value="1"/>
</dbReference>
<dbReference type="SUPFAM" id="SSF57845">
    <property type="entry name" value="B-box zinc-binding domain"/>
    <property type="match status" value="1"/>
</dbReference>
<dbReference type="SUPFAM" id="SSF49899">
    <property type="entry name" value="Concanavalin A-like lectins/glucanases"/>
    <property type="match status" value="1"/>
</dbReference>
<dbReference type="SUPFAM" id="SSF57850">
    <property type="entry name" value="RING/U-box"/>
    <property type="match status" value="1"/>
</dbReference>
<dbReference type="PROSITE" id="PS50188">
    <property type="entry name" value="B302_SPRY"/>
    <property type="match status" value="1"/>
</dbReference>
<dbReference type="PROSITE" id="PS50119">
    <property type="entry name" value="ZF_BBOX"/>
    <property type="match status" value="1"/>
</dbReference>
<dbReference type="PROSITE" id="PS00518">
    <property type="entry name" value="ZF_RING_1"/>
    <property type="match status" value="1"/>
</dbReference>
<dbReference type="PROSITE" id="PS50089">
    <property type="entry name" value="ZF_RING_2"/>
    <property type="match status" value="1"/>
</dbReference>
<proteinExistence type="evidence at transcript level"/>